<gene>
    <name evidence="1" type="primary">kdsB</name>
    <name type="ordered locus">ACP_2812</name>
</gene>
<reference key="1">
    <citation type="journal article" date="2009" name="Appl. Environ. Microbiol.">
        <title>Three genomes from the phylum Acidobacteria provide insight into the lifestyles of these microorganisms in soils.</title>
        <authorList>
            <person name="Ward N.L."/>
            <person name="Challacombe J.F."/>
            <person name="Janssen P.H."/>
            <person name="Henrissat B."/>
            <person name="Coutinho P.M."/>
            <person name="Wu M."/>
            <person name="Xie G."/>
            <person name="Haft D.H."/>
            <person name="Sait M."/>
            <person name="Badger J."/>
            <person name="Barabote R.D."/>
            <person name="Bradley B."/>
            <person name="Brettin T.S."/>
            <person name="Brinkac L.M."/>
            <person name="Bruce D."/>
            <person name="Creasy T."/>
            <person name="Daugherty S.C."/>
            <person name="Davidsen T.M."/>
            <person name="DeBoy R.T."/>
            <person name="Detter J.C."/>
            <person name="Dodson R.J."/>
            <person name="Durkin A.S."/>
            <person name="Ganapathy A."/>
            <person name="Gwinn-Giglio M."/>
            <person name="Han C.S."/>
            <person name="Khouri H."/>
            <person name="Kiss H."/>
            <person name="Kothari S.P."/>
            <person name="Madupu R."/>
            <person name="Nelson K.E."/>
            <person name="Nelson W.C."/>
            <person name="Paulsen I."/>
            <person name="Penn K."/>
            <person name="Ren Q."/>
            <person name="Rosovitz M.J."/>
            <person name="Selengut J.D."/>
            <person name="Shrivastava S."/>
            <person name="Sullivan S.A."/>
            <person name="Tapia R."/>
            <person name="Thompson L.S."/>
            <person name="Watkins K.L."/>
            <person name="Yang Q."/>
            <person name="Yu C."/>
            <person name="Zafar N."/>
            <person name="Zhou L."/>
            <person name="Kuske C.R."/>
        </authorList>
    </citation>
    <scope>NUCLEOTIDE SEQUENCE [LARGE SCALE GENOMIC DNA]</scope>
    <source>
        <strain>ATCC 51196 / DSM 11244 / BCRC 80197 / JCM 7670 / NBRC 15755 / NCIMB 13165 / 161</strain>
    </source>
</reference>
<name>KDSB_ACIC5</name>
<feature type="chain" id="PRO_1000117794" description="3-deoxy-manno-octulosonate cytidylyltransferase">
    <location>
        <begin position="1"/>
        <end position="245"/>
    </location>
</feature>
<dbReference type="EC" id="2.7.7.38" evidence="1"/>
<dbReference type="EMBL" id="CP001472">
    <property type="protein sequence ID" value="ACO33639.1"/>
    <property type="molecule type" value="Genomic_DNA"/>
</dbReference>
<dbReference type="RefSeq" id="WP_015897871.1">
    <property type="nucleotide sequence ID" value="NC_012483.1"/>
</dbReference>
<dbReference type="SMR" id="C1F3B8"/>
<dbReference type="FunCoup" id="C1F3B8">
    <property type="interactions" value="403"/>
</dbReference>
<dbReference type="STRING" id="240015.ACP_2812"/>
<dbReference type="KEGG" id="aca:ACP_2812"/>
<dbReference type="eggNOG" id="COG1212">
    <property type="taxonomic scope" value="Bacteria"/>
</dbReference>
<dbReference type="HOGENOM" id="CLU_065038_0_1_0"/>
<dbReference type="InParanoid" id="C1F3B8"/>
<dbReference type="OrthoDB" id="9815559at2"/>
<dbReference type="UniPathway" id="UPA00030"/>
<dbReference type="UniPathway" id="UPA00358">
    <property type="reaction ID" value="UER00476"/>
</dbReference>
<dbReference type="Proteomes" id="UP000002207">
    <property type="component" value="Chromosome"/>
</dbReference>
<dbReference type="GO" id="GO:0005829">
    <property type="term" value="C:cytosol"/>
    <property type="evidence" value="ECO:0007669"/>
    <property type="project" value="TreeGrafter"/>
</dbReference>
<dbReference type="GO" id="GO:0008690">
    <property type="term" value="F:3-deoxy-manno-octulosonate cytidylyltransferase activity"/>
    <property type="evidence" value="ECO:0007669"/>
    <property type="project" value="UniProtKB-UniRule"/>
</dbReference>
<dbReference type="GO" id="GO:0033468">
    <property type="term" value="P:CMP-keto-3-deoxy-D-manno-octulosonic acid biosynthetic process"/>
    <property type="evidence" value="ECO:0007669"/>
    <property type="project" value="UniProtKB-UniRule"/>
</dbReference>
<dbReference type="GO" id="GO:0009103">
    <property type="term" value="P:lipopolysaccharide biosynthetic process"/>
    <property type="evidence" value="ECO:0007669"/>
    <property type="project" value="UniProtKB-UniRule"/>
</dbReference>
<dbReference type="CDD" id="cd02517">
    <property type="entry name" value="CMP-KDO-Synthetase"/>
    <property type="match status" value="1"/>
</dbReference>
<dbReference type="Gene3D" id="3.90.550.10">
    <property type="entry name" value="Spore Coat Polysaccharide Biosynthesis Protein SpsA, Chain A"/>
    <property type="match status" value="1"/>
</dbReference>
<dbReference type="HAMAP" id="MF_00057">
    <property type="entry name" value="KdsB"/>
    <property type="match status" value="1"/>
</dbReference>
<dbReference type="InterPro" id="IPR003329">
    <property type="entry name" value="Cytidylyl_trans"/>
</dbReference>
<dbReference type="InterPro" id="IPR004528">
    <property type="entry name" value="KdsB"/>
</dbReference>
<dbReference type="InterPro" id="IPR029044">
    <property type="entry name" value="Nucleotide-diphossugar_trans"/>
</dbReference>
<dbReference type="NCBIfam" id="TIGR00466">
    <property type="entry name" value="kdsB"/>
    <property type="match status" value="1"/>
</dbReference>
<dbReference type="NCBIfam" id="NF003952">
    <property type="entry name" value="PRK05450.1-5"/>
    <property type="match status" value="1"/>
</dbReference>
<dbReference type="NCBIfam" id="NF009905">
    <property type="entry name" value="PRK13368.1"/>
    <property type="match status" value="1"/>
</dbReference>
<dbReference type="PANTHER" id="PTHR42866">
    <property type="entry name" value="3-DEOXY-MANNO-OCTULOSONATE CYTIDYLYLTRANSFERASE"/>
    <property type="match status" value="1"/>
</dbReference>
<dbReference type="PANTHER" id="PTHR42866:SF2">
    <property type="entry name" value="3-DEOXY-MANNO-OCTULOSONATE CYTIDYLYLTRANSFERASE, MITOCHONDRIAL"/>
    <property type="match status" value="1"/>
</dbReference>
<dbReference type="Pfam" id="PF02348">
    <property type="entry name" value="CTP_transf_3"/>
    <property type="match status" value="1"/>
</dbReference>
<dbReference type="SUPFAM" id="SSF53448">
    <property type="entry name" value="Nucleotide-diphospho-sugar transferases"/>
    <property type="match status" value="1"/>
</dbReference>
<comment type="function">
    <text evidence="1">Activates KDO (a required 8-carbon sugar) for incorporation into bacterial lipopolysaccharide in Gram-negative bacteria.</text>
</comment>
<comment type="catalytic activity">
    <reaction evidence="1">
        <text>3-deoxy-alpha-D-manno-oct-2-ulosonate + CTP = CMP-3-deoxy-beta-D-manno-octulosonate + diphosphate</text>
        <dbReference type="Rhea" id="RHEA:23448"/>
        <dbReference type="ChEBI" id="CHEBI:33019"/>
        <dbReference type="ChEBI" id="CHEBI:37563"/>
        <dbReference type="ChEBI" id="CHEBI:85986"/>
        <dbReference type="ChEBI" id="CHEBI:85987"/>
        <dbReference type="EC" id="2.7.7.38"/>
    </reaction>
</comment>
<comment type="pathway">
    <text evidence="1">Nucleotide-sugar biosynthesis; CMP-3-deoxy-D-manno-octulosonate biosynthesis; CMP-3-deoxy-D-manno-octulosonate from 3-deoxy-D-manno-octulosonate and CTP: step 1/1.</text>
</comment>
<comment type="pathway">
    <text evidence="1">Bacterial outer membrane biogenesis; lipopolysaccharide biosynthesis.</text>
</comment>
<comment type="subcellular location">
    <subcellularLocation>
        <location evidence="1">Cytoplasm</location>
    </subcellularLocation>
</comment>
<comment type="similarity">
    <text evidence="1">Belongs to the KdsB family.</text>
</comment>
<organism>
    <name type="scientific">Acidobacterium capsulatum (strain ATCC 51196 / DSM 11244 / BCRC 80197 / JCM 7670 / NBRC 15755 / NCIMB 13165 / 161)</name>
    <dbReference type="NCBI Taxonomy" id="240015"/>
    <lineage>
        <taxon>Bacteria</taxon>
        <taxon>Pseudomonadati</taxon>
        <taxon>Acidobacteriota</taxon>
        <taxon>Terriglobia</taxon>
        <taxon>Terriglobales</taxon>
        <taxon>Acidobacteriaceae</taxon>
        <taxon>Acidobacterium</taxon>
    </lineage>
</organism>
<keyword id="KW-0963">Cytoplasm</keyword>
<keyword id="KW-0448">Lipopolysaccharide biosynthesis</keyword>
<keyword id="KW-0548">Nucleotidyltransferase</keyword>
<keyword id="KW-1185">Reference proteome</keyword>
<keyword id="KW-0808">Transferase</keyword>
<protein>
    <recommendedName>
        <fullName evidence="1">3-deoxy-manno-octulosonate cytidylyltransferase</fullName>
        <ecNumber evidence="1">2.7.7.38</ecNumber>
    </recommendedName>
    <alternativeName>
        <fullName evidence="1">CMP-2-keto-3-deoxyoctulosonic acid synthase</fullName>
        <shortName evidence="1">CKS</shortName>
        <shortName evidence="1">CMP-KDO synthase</shortName>
    </alternativeName>
</protein>
<proteinExistence type="inferred from homology"/>
<accession>C1F3B8</accession>
<sequence>MSSLNVLGVIPARIGSTRLPRKVLREIAGEPMLAWVYRAARASGQLRQVLIATDAEEVMEFARQKGLPAIFTPEDCASGTDRVFVVAQSIDADIYVNIQGDEPMLTPAHFTALLAPFEQPHVQVTTLSVPCSEDEIANPNAVKVVTAADGRALYFSRATIPYDRDAAGFIGYRKHLGLYAYRKAALRRFATLPPSRLEEIERLEQLRLLENGIDIHVAEAPGSTIGVDTEEDLRAVEQLLLERKK</sequence>
<evidence type="ECO:0000255" key="1">
    <source>
        <dbReference type="HAMAP-Rule" id="MF_00057"/>
    </source>
</evidence>